<comment type="function">
    <text evidence="4">Putatively gated water-specific channel, requiring a cysteine residue within the channel. Impermeable to water, glycerol and urea when expressed in Xenopus oocytes. Not regulated by pH; channels remain impermeable to water at pH 7.4 and 5.2.</text>
</comment>
<comment type="subcellular location">
    <subcellularLocation>
        <location evidence="4">Cell membrane</location>
        <topology evidence="4">Multi-pass membrane protein</topology>
    </subcellularLocation>
    <subcellularLocation>
        <location evidence="4">Cytoplasmic vesicle</location>
    </subcellularLocation>
    <text evidence="2 4">Expressed in lamellipodia-like protrusions of the plasma membrane and intracellular vacuolar structures.</text>
</comment>
<comment type="alternative products">
    <event type="alternative initiation"/>
    <isoform>
        <id>Q54WT8-1</id>
        <name evidence="4">Long</name>
        <sequence type="displayed"/>
    </isoform>
    <isoform>
        <id>Q54WT8-2</id>
        <name evidence="4">Short</name>
        <sequence type="described" ref="VSP_043004"/>
    </isoform>
</comment>
<comment type="developmental stage">
    <text evidence="4">Expressed throughout development from amoebae through to the formation of spores at 24 hours. Highest expression is at 12 and 24 hours.</text>
</comment>
<comment type="induction">
    <text evidence="4">Inhibited by mercuric chloride.</text>
</comment>
<comment type="domain">
    <text evidence="1">Aquaporins contain two tandem repeats each containing three membrane-spanning domains and a pore-forming loop with the signature motif Asn-Pro-Ala (NPA).</text>
</comment>
<comment type="PTM">
    <text evidence="4">Glycosylated and non-glycosylated forms exist throughout all developmental stages.</text>
</comment>
<comment type="similarity">
    <text evidence="2">Belongs to the MIP/aquaporin (TC 1.A.8) family.</text>
</comment>
<protein>
    <recommendedName>
        <fullName>Aquaporin-B</fullName>
    </recommendedName>
</protein>
<organism>
    <name type="scientific">Dictyostelium discoideum</name>
    <name type="common">Social amoeba</name>
    <dbReference type="NCBI Taxonomy" id="44689"/>
    <lineage>
        <taxon>Eukaryota</taxon>
        <taxon>Amoebozoa</taxon>
        <taxon>Evosea</taxon>
        <taxon>Eumycetozoa</taxon>
        <taxon>Dictyostelia</taxon>
        <taxon>Dictyosteliales</taxon>
        <taxon>Dictyosteliaceae</taxon>
        <taxon>Dictyostelium</taxon>
    </lineage>
</organism>
<evidence type="ECO:0000250" key="1">
    <source>
        <dbReference type="UniProtKB" id="Q9U8P7"/>
    </source>
</evidence>
<evidence type="ECO:0000255" key="2"/>
<evidence type="ECO:0000256" key="3">
    <source>
        <dbReference type="SAM" id="MobiDB-lite"/>
    </source>
</evidence>
<evidence type="ECO:0000269" key="4">
    <source>
    </source>
</evidence>
<evidence type="ECO:0000303" key="5">
    <source>
    </source>
</evidence>
<evidence type="ECO:0000305" key="6"/>
<evidence type="ECO:0000312" key="7">
    <source>
        <dbReference type="EMBL" id="EAL67660.1"/>
    </source>
</evidence>
<sequence>MSLKRSDDYQDLEEGIAMEDGGNIKDEEEKPLDPIEEQNKKRWVLIRAVLGELLCTFLFVYVLCATSANFIRLGSPPNPVVGGLSTGFAAVALIYSFADVSGAHFNPAVTFATCVTRKTSITKGLMYVGAQLVGSVLASLILLATFPGNFPGDKNAASAVAIAPSTDANIGNAFLTELVLTFILVYVIFAVAFDTVDNSVKTKVVGKSSSNNLTIYTTSGQTKAGFAPIAIGFTLGFLCFLGGSVSGGAFNPARVFGTALVGNNWTRHWMYWIADFLGAGLAGFAQKFFSSTHK</sequence>
<name>AQPB_DICDI</name>
<keyword id="KW-0024">Alternative initiation</keyword>
<keyword id="KW-1003">Cell membrane</keyword>
<keyword id="KW-0968">Cytoplasmic vesicle</keyword>
<keyword id="KW-0325">Glycoprotein</keyword>
<keyword id="KW-0472">Membrane</keyword>
<keyword id="KW-0597">Phosphoprotein</keyword>
<keyword id="KW-1185">Reference proteome</keyword>
<keyword id="KW-0677">Repeat</keyword>
<keyword id="KW-0812">Transmembrane</keyword>
<keyword id="KW-1133">Transmembrane helix</keyword>
<keyword id="KW-0813">Transport</keyword>
<gene>
    <name evidence="5" type="primary">aqpB</name>
    <name type="ORF">DDB_G0279443</name>
</gene>
<proteinExistence type="evidence at protein level"/>
<reference evidence="6" key="1">
    <citation type="journal article" date="2012" name="J. Biol. Chem.">
        <title>Functional characterization of a novel aquaporin from Dictyostelium discoideum amoebae implies a unique gating mechanism.</title>
        <authorList>
            <person name="von Buelow J."/>
            <person name="Mueller-Lucks A."/>
            <person name="Kai L."/>
            <person name="Bernhard F."/>
            <person name="Beitz E."/>
        </authorList>
    </citation>
    <scope>NUCLEOTIDE SEQUENCE [MRNA] (ISOFORM LONG)</scope>
    <scope>ALTERNATIVE INITIATION</scope>
    <scope>FUNCTION</scope>
    <scope>SUBCELLULAR LOCATION</scope>
    <scope>DEVELOPMENTAL STAGE</scope>
    <scope>INDUCTION</scope>
    <scope>GLYCOSYLATION</scope>
    <scope>MUTAGENESIS OF SER-120; 208-SER--ASN-212; 208-SER--SER-219 AND ASP-275</scope>
    <source>
        <strain evidence="4">AX2</strain>
    </source>
</reference>
<reference evidence="7" key="2">
    <citation type="journal article" date="2005" name="Nature">
        <title>The genome of the social amoeba Dictyostelium discoideum.</title>
        <authorList>
            <person name="Eichinger L."/>
            <person name="Pachebat J.A."/>
            <person name="Gloeckner G."/>
            <person name="Rajandream M.A."/>
            <person name="Sucgang R."/>
            <person name="Berriman M."/>
            <person name="Song J."/>
            <person name="Olsen R."/>
            <person name="Szafranski K."/>
            <person name="Xu Q."/>
            <person name="Tunggal B."/>
            <person name="Kummerfeld S."/>
            <person name="Madera M."/>
            <person name="Konfortov B.A."/>
            <person name="Rivero F."/>
            <person name="Bankier A.T."/>
            <person name="Lehmann R."/>
            <person name="Hamlin N."/>
            <person name="Davies R."/>
            <person name="Gaudet P."/>
            <person name="Fey P."/>
            <person name="Pilcher K."/>
            <person name="Chen G."/>
            <person name="Saunders D."/>
            <person name="Sodergren E.J."/>
            <person name="Davis P."/>
            <person name="Kerhornou A."/>
            <person name="Nie X."/>
            <person name="Hall N."/>
            <person name="Anjard C."/>
            <person name="Hemphill L."/>
            <person name="Bason N."/>
            <person name="Farbrother P."/>
            <person name="Desany B."/>
            <person name="Just E."/>
            <person name="Morio T."/>
            <person name="Rost R."/>
            <person name="Churcher C.M."/>
            <person name="Cooper J."/>
            <person name="Haydock S."/>
            <person name="van Driessche N."/>
            <person name="Cronin A."/>
            <person name="Goodhead I."/>
            <person name="Muzny D.M."/>
            <person name="Mourier T."/>
            <person name="Pain A."/>
            <person name="Lu M."/>
            <person name="Harper D."/>
            <person name="Lindsay R."/>
            <person name="Hauser H."/>
            <person name="James K.D."/>
            <person name="Quiles M."/>
            <person name="Madan Babu M."/>
            <person name="Saito T."/>
            <person name="Buchrieser C."/>
            <person name="Wardroper A."/>
            <person name="Felder M."/>
            <person name="Thangavelu M."/>
            <person name="Johnson D."/>
            <person name="Knights A."/>
            <person name="Loulseged H."/>
            <person name="Mungall K.L."/>
            <person name="Oliver K."/>
            <person name="Price C."/>
            <person name="Quail M.A."/>
            <person name="Urushihara H."/>
            <person name="Hernandez J."/>
            <person name="Rabbinowitsch E."/>
            <person name="Steffen D."/>
            <person name="Sanders M."/>
            <person name="Ma J."/>
            <person name="Kohara Y."/>
            <person name="Sharp S."/>
            <person name="Simmonds M.N."/>
            <person name="Spiegler S."/>
            <person name="Tivey A."/>
            <person name="Sugano S."/>
            <person name="White B."/>
            <person name="Walker D."/>
            <person name="Woodward J.R."/>
            <person name="Winckler T."/>
            <person name="Tanaka Y."/>
            <person name="Shaulsky G."/>
            <person name="Schleicher M."/>
            <person name="Weinstock G.M."/>
            <person name="Rosenthal A."/>
            <person name="Cox E.C."/>
            <person name="Chisholm R.L."/>
            <person name="Gibbs R.A."/>
            <person name="Loomis W.F."/>
            <person name="Platzer M."/>
            <person name="Kay R.R."/>
            <person name="Williams J.G."/>
            <person name="Dear P.H."/>
            <person name="Noegel A.A."/>
            <person name="Barrell B.G."/>
            <person name="Kuspa A."/>
        </authorList>
    </citation>
    <scope>NUCLEOTIDE SEQUENCE [LARGE SCALE GENOMIC DNA]</scope>
    <source>
        <strain>AX4</strain>
    </source>
</reference>
<feature type="chain" id="PRO_0000416937" description="Aquaporin-B">
    <location>
        <begin position="1"/>
        <end position="294"/>
    </location>
</feature>
<feature type="topological domain" description="Cytoplasmic" evidence="2">
    <location>
        <begin position="1"/>
        <end position="42"/>
    </location>
</feature>
<feature type="transmembrane region" description="Helical" evidence="2">
    <location>
        <begin position="43"/>
        <end position="63"/>
    </location>
</feature>
<feature type="topological domain" description="Extracellular" evidence="2">
    <location>
        <begin position="64"/>
        <end position="79"/>
    </location>
</feature>
<feature type="transmembrane region" description="Helical" evidence="2">
    <location>
        <begin position="80"/>
        <end position="100"/>
    </location>
</feature>
<feature type="topological domain" description="Cytoplasmic" evidence="2">
    <location>
        <begin position="101"/>
        <end position="123"/>
    </location>
</feature>
<feature type="transmembrane region" description="Helical" evidence="2">
    <location>
        <begin position="124"/>
        <end position="144"/>
    </location>
</feature>
<feature type="topological domain" description="Extracellular" evidence="2">
    <location>
        <begin position="145"/>
        <end position="172"/>
    </location>
</feature>
<feature type="transmembrane region" description="Helical" evidence="2">
    <location>
        <begin position="173"/>
        <end position="193"/>
    </location>
</feature>
<feature type="topological domain" description="Cytoplasmic" evidence="2">
    <location>
        <begin position="194"/>
        <end position="224"/>
    </location>
</feature>
<feature type="transmembrane region" description="Helical" evidence="2">
    <location>
        <begin position="225"/>
        <end position="245"/>
    </location>
</feature>
<feature type="topological domain" description="Extracellular" evidence="2">
    <location>
        <begin position="246"/>
        <end position="268"/>
    </location>
</feature>
<feature type="transmembrane region" description="Helical" evidence="2">
    <location>
        <begin position="269"/>
        <end position="289"/>
    </location>
</feature>
<feature type="topological domain" description="Cytoplasmic" evidence="2">
    <location>
        <begin position="290"/>
        <end position="294"/>
    </location>
</feature>
<feature type="region of interest" description="Disordered" evidence="3">
    <location>
        <begin position="1"/>
        <end position="31"/>
    </location>
</feature>
<feature type="region of interest" description="Required for water permeability" evidence="4">
    <location>
        <begin position="208"/>
        <end position="219"/>
    </location>
</feature>
<feature type="short sequence motif" description="NPA 1" evidence="1">
    <location>
        <begin position="106"/>
        <end position="108"/>
    </location>
</feature>
<feature type="short sequence motif" description="NPA 2" evidence="1">
    <location>
        <begin position="251"/>
        <end position="253"/>
    </location>
</feature>
<feature type="compositionally biased region" description="Basic and acidic residues" evidence="3">
    <location>
        <begin position="22"/>
        <end position="31"/>
    </location>
</feature>
<feature type="site" description="Selectivity filter" evidence="4">
    <location>
        <position position="239"/>
    </location>
</feature>
<feature type="glycosylation site" description="O-linked (GalNAc...) serine" evidence="4">
    <location>
        <position position="75"/>
    </location>
</feature>
<feature type="splice variant" id="VSP_043004" description="In isoform Short." evidence="5">
    <location>
        <begin position="1"/>
        <end position="17"/>
    </location>
</feature>
<feature type="mutagenesis site" description="Permanently unphosphorylated state, impermeable to water in Xenopus oocytes." evidence="4">
    <original>S</original>
    <variation>A</variation>
    <location>
        <position position="120"/>
    </location>
</feature>
<feature type="mutagenesis site" description="Permanently phosphorylated, impermeable to water in Xenopus oocytes." evidence="4">
    <original>S</original>
    <variation>D</variation>
    <location>
        <position position="120"/>
    </location>
</feature>
<feature type="mutagenesis site" description="Permeable to water in Xenopus oocytes and liposomes, impermeable to glycerol and urea." evidence="4">
    <location>
        <begin position="208"/>
        <end position="219"/>
    </location>
</feature>
<feature type="mutagenesis site" description="Impermeable to water in Xenopus oocytes." evidence="4">
    <location>
        <begin position="208"/>
        <end position="212"/>
    </location>
</feature>
<feature type="mutagenesis site" description="Impermeable to water in Xenopus oocytes." evidence="4">
    <original>D</original>
    <variation>A</variation>
    <location>
        <position position="275"/>
    </location>
</feature>
<feature type="mutagenesis site" description="Impermeable to water in Xenopus oocytes." evidence="4">
    <original>D</original>
    <variation>P</variation>
    <location>
        <position position="275"/>
    </location>
</feature>
<dbReference type="EMBL" id="AAFI02000031">
    <property type="protein sequence ID" value="EAL67660.1"/>
    <property type="molecule type" value="Genomic_DNA"/>
</dbReference>
<dbReference type="RefSeq" id="XP_641629.1">
    <property type="nucleotide sequence ID" value="XM_636537.1"/>
</dbReference>
<dbReference type="SMR" id="Q54WT8"/>
<dbReference type="FunCoup" id="Q54WT8">
    <property type="interactions" value="9"/>
</dbReference>
<dbReference type="STRING" id="44689.Q54WT8"/>
<dbReference type="TCDB" id="1.A.8.10.8">
    <property type="family name" value="the major intrinsic protein (mip) family"/>
</dbReference>
<dbReference type="GlyCosmos" id="Q54WT8">
    <property type="glycosylation" value="1 site, No reported glycans"/>
</dbReference>
<dbReference type="GlyGen" id="Q54WT8">
    <property type="glycosylation" value="1 site"/>
</dbReference>
<dbReference type="iPTMnet" id="Q54WT8"/>
<dbReference type="PaxDb" id="44689-DDB0205768"/>
<dbReference type="EnsemblProtists" id="EAL67660">
    <property type="protein sequence ID" value="EAL67660"/>
    <property type="gene ID" value="DDB_G0279443"/>
</dbReference>
<dbReference type="GeneID" id="8622035"/>
<dbReference type="KEGG" id="ddi:DDB_G0279443"/>
<dbReference type="dictyBase" id="DDB_G0279443">
    <property type="gene designation" value="aqpB"/>
</dbReference>
<dbReference type="VEuPathDB" id="AmoebaDB:DDB_G0279443"/>
<dbReference type="eggNOG" id="KOG0223">
    <property type="taxonomic scope" value="Eukaryota"/>
</dbReference>
<dbReference type="HOGENOM" id="CLU_020019_3_4_1"/>
<dbReference type="InParanoid" id="Q54WT8"/>
<dbReference type="OMA" id="RAFLYWI"/>
<dbReference type="PhylomeDB" id="Q54WT8"/>
<dbReference type="Reactome" id="R-DDI-432047">
    <property type="pathway name" value="Passive transport by Aquaporins"/>
</dbReference>
<dbReference type="PRO" id="PR:Q54WT8"/>
<dbReference type="Proteomes" id="UP000002195">
    <property type="component" value="Chromosome 3"/>
</dbReference>
<dbReference type="GO" id="GO:0031410">
    <property type="term" value="C:cytoplasmic vesicle"/>
    <property type="evidence" value="ECO:0000314"/>
    <property type="project" value="dictyBase"/>
</dbReference>
<dbReference type="GO" id="GO:0016020">
    <property type="term" value="C:membrane"/>
    <property type="evidence" value="ECO:0000318"/>
    <property type="project" value="GO_Central"/>
</dbReference>
<dbReference type="GO" id="GO:0005886">
    <property type="term" value="C:plasma membrane"/>
    <property type="evidence" value="ECO:0000314"/>
    <property type="project" value="dictyBase"/>
</dbReference>
<dbReference type="GO" id="GO:0015250">
    <property type="term" value="F:water channel activity"/>
    <property type="evidence" value="ECO:0000318"/>
    <property type="project" value="GO_Central"/>
</dbReference>
<dbReference type="GO" id="GO:0048870">
    <property type="term" value="P:cell motility"/>
    <property type="evidence" value="ECO:0000315"/>
    <property type="project" value="dictyBase"/>
</dbReference>
<dbReference type="GO" id="GO:0006971">
    <property type="term" value="P:hypotonic response"/>
    <property type="evidence" value="ECO:0000315"/>
    <property type="project" value="dictyBase"/>
</dbReference>
<dbReference type="GO" id="GO:0006833">
    <property type="term" value="P:water transport"/>
    <property type="evidence" value="ECO:0000318"/>
    <property type="project" value="GO_Central"/>
</dbReference>
<dbReference type="CDD" id="cd00333">
    <property type="entry name" value="MIP"/>
    <property type="match status" value="1"/>
</dbReference>
<dbReference type="FunFam" id="1.20.1080.10:FF:000069">
    <property type="entry name" value="Aquaporin-B"/>
    <property type="match status" value="1"/>
</dbReference>
<dbReference type="Gene3D" id="1.20.1080.10">
    <property type="entry name" value="Glycerol uptake facilitator protein"/>
    <property type="match status" value="1"/>
</dbReference>
<dbReference type="InterPro" id="IPR023271">
    <property type="entry name" value="Aquaporin-like"/>
</dbReference>
<dbReference type="InterPro" id="IPR034294">
    <property type="entry name" value="Aquaporin_transptr"/>
</dbReference>
<dbReference type="InterPro" id="IPR000425">
    <property type="entry name" value="MIP"/>
</dbReference>
<dbReference type="InterPro" id="IPR022357">
    <property type="entry name" value="MIP_CS"/>
</dbReference>
<dbReference type="PANTHER" id="PTHR19139">
    <property type="entry name" value="AQUAPORIN TRANSPORTER"/>
    <property type="match status" value="1"/>
</dbReference>
<dbReference type="PANTHER" id="PTHR19139:SF199">
    <property type="entry name" value="MIP17260P"/>
    <property type="match status" value="1"/>
</dbReference>
<dbReference type="Pfam" id="PF00230">
    <property type="entry name" value="MIP"/>
    <property type="match status" value="1"/>
</dbReference>
<dbReference type="PRINTS" id="PR00783">
    <property type="entry name" value="MINTRINSICP"/>
</dbReference>
<dbReference type="SUPFAM" id="SSF81338">
    <property type="entry name" value="Aquaporin-like"/>
    <property type="match status" value="1"/>
</dbReference>
<dbReference type="PROSITE" id="PS00221">
    <property type="entry name" value="MIP"/>
    <property type="match status" value="1"/>
</dbReference>
<accession>Q54WT8</accession>